<reference key="1">
    <citation type="journal article" date="1995" name="Proc. Natl. Acad. Sci. U.S.A.">
        <title>Seminalplasmin: recent evolution of another member of the neuropeptide Y gene family.</title>
        <authorList>
            <person name="Herzog H."/>
            <person name="Hort Y."/>
            <person name="Schneider R."/>
            <person name="Shine J."/>
        </authorList>
    </citation>
    <scope>NUCLEOTIDE SEQUENCE [GENOMIC DNA]</scope>
</reference>
<reference key="2">
    <citation type="submission" date="2005-08" db="EMBL/GenBank/DDBJ databases">
        <authorList>
            <consortium name="NIH - Mammalian Gene Collection (MGC) project"/>
        </authorList>
    </citation>
    <scope>NUCLEOTIDE SEQUENCE [LARGE SCALE MRNA]</scope>
    <source>
        <strain>Crossbred X Angus</strain>
        <tissue>Ileum</tissue>
    </source>
</reference>
<comment type="function">
    <text>This gut peptide inhibits exocrine pancreatic secretion, has a vasoconstrictory action and inhibitis jejunal and colonic mobility.</text>
</comment>
<comment type="subcellular location">
    <subcellularLocation>
        <location>Secreted</location>
    </subcellularLocation>
</comment>
<comment type="similarity">
    <text evidence="3">Belongs to the NPY family.</text>
</comment>
<evidence type="ECO:0000250" key="1"/>
<evidence type="ECO:0000250" key="2">
    <source>
        <dbReference type="UniProtKB" id="P68005"/>
    </source>
</evidence>
<evidence type="ECO:0000305" key="3"/>
<name>PYY_BOVIN</name>
<gene>
    <name type="primary">PYY</name>
</gene>
<accession>P51694</accession>
<accession>Q3T155</accession>
<proteinExistence type="inferred from homology"/>
<protein>
    <recommendedName>
        <fullName>Peptide YY</fullName>
        <shortName>PYY</shortName>
    </recommendedName>
    <alternativeName>
        <fullName>Peptide tyrosine tyrosine</fullName>
    </alternativeName>
</protein>
<organism>
    <name type="scientific">Bos taurus</name>
    <name type="common">Bovine</name>
    <dbReference type="NCBI Taxonomy" id="9913"/>
    <lineage>
        <taxon>Eukaryota</taxon>
        <taxon>Metazoa</taxon>
        <taxon>Chordata</taxon>
        <taxon>Craniata</taxon>
        <taxon>Vertebrata</taxon>
        <taxon>Euteleostomi</taxon>
        <taxon>Mammalia</taxon>
        <taxon>Eutheria</taxon>
        <taxon>Laurasiatheria</taxon>
        <taxon>Artiodactyla</taxon>
        <taxon>Ruminantia</taxon>
        <taxon>Pecora</taxon>
        <taxon>Bovidae</taxon>
        <taxon>Bovinae</taxon>
        <taxon>Bos</taxon>
    </lineage>
</organism>
<dbReference type="EMBL" id="L37369">
    <property type="protein sequence ID" value="AAC37326.1"/>
    <property type="molecule type" value="Genomic_DNA"/>
</dbReference>
<dbReference type="EMBL" id="BC102123">
    <property type="protein sequence ID" value="AAI02124.1"/>
    <property type="molecule type" value="mRNA"/>
</dbReference>
<dbReference type="PIR" id="A55914">
    <property type="entry name" value="A55914"/>
</dbReference>
<dbReference type="RefSeq" id="NP_001035677.1">
    <property type="nucleotide sequence ID" value="NM_001040587.2"/>
</dbReference>
<dbReference type="FunCoup" id="P51694">
    <property type="interactions" value="7"/>
</dbReference>
<dbReference type="STRING" id="9913.ENSBTAP00000055348"/>
<dbReference type="PaxDb" id="9913-ENSBTAP00000055348"/>
<dbReference type="Ensembl" id="ENSBTAT00000062944.3">
    <property type="protein sequence ID" value="ENSBTAP00000055348.1"/>
    <property type="gene ID" value="ENSBTAG00000046022.3"/>
</dbReference>
<dbReference type="GeneID" id="615800"/>
<dbReference type="KEGG" id="bta:615800"/>
<dbReference type="CTD" id="5697"/>
<dbReference type="VEuPathDB" id="HostDB:ENSBTAG00000046022"/>
<dbReference type="eggNOG" id="ENOG502S267">
    <property type="taxonomic scope" value="Eukaryota"/>
</dbReference>
<dbReference type="GeneTree" id="ENSGT00940000160643"/>
<dbReference type="HOGENOM" id="CLU_162379_1_0_1"/>
<dbReference type="InParanoid" id="P51694"/>
<dbReference type="OMA" id="DSNRDQR"/>
<dbReference type="OrthoDB" id="9852947at2759"/>
<dbReference type="TreeFam" id="TF332778"/>
<dbReference type="Reactome" id="R-BTA-375276">
    <property type="pathway name" value="Peptide ligand-binding receptors"/>
</dbReference>
<dbReference type="Reactome" id="R-BTA-418594">
    <property type="pathway name" value="G alpha (i) signalling events"/>
</dbReference>
<dbReference type="Proteomes" id="UP000009136">
    <property type="component" value="Chromosome 19"/>
</dbReference>
<dbReference type="Bgee" id="ENSBTAG00000046022">
    <property type="expression patterns" value="Expressed in ascending colon and 78 other cell types or tissues"/>
</dbReference>
<dbReference type="GO" id="GO:0005615">
    <property type="term" value="C:extracellular space"/>
    <property type="evidence" value="ECO:0000318"/>
    <property type="project" value="GO_Central"/>
</dbReference>
<dbReference type="GO" id="GO:0005184">
    <property type="term" value="F:neuropeptide hormone activity"/>
    <property type="evidence" value="ECO:0000318"/>
    <property type="project" value="GO_Central"/>
</dbReference>
<dbReference type="GO" id="GO:0031841">
    <property type="term" value="F:neuropeptide Y receptor binding"/>
    <property type="evidence" value="ECO:0000318"/>
    <property type="project" value="GO_Central"/>
</dbReference>
<dbReference type="GO" id="GO:0007631">
    <property type="term" value="P:feeding behavior"/>
    <property type="evidence" value="ECO:0000318"/>
    <property type="project" value="GO_Central"/>
</dbReference>
<dbReference type="GO" id="GO:0007218">
    <property type="term" value="P:neuropeptide signaling pathway"/>
    <property type="evidence" value="ECO:0000318"/>
    <property type="project" value="GO_Central"/>
</dbReference>
<dbReference type="CDD" id="cd00126">
    <property type="entry name" value="PAH"/>
    <property type="match status" value="1"/>
</dbReference>
<dbReference type="Gene3D" id="6.10.250.900">
    <property type="match status" value="1"/>
</dbReference>
<dbReference type="InterPro" id="IPR001955">
    <property type="entry name" value="Pancreatic_hormone-like"/>
</dbReference>
<dbReference type="InterPro" id="IPR020392">
    <property type="entry name" value="Pancreatic_hormone-like_CS"/>
</dbReference>
<dbReference type="PANTHER" id="PTHR10533">
    <property type="entry name" value="NEUROPEPTIDE Y/PANCREATIC HORMONE/PEPTIDE YY"/>
    <property type="match status" value="1"/>
</dbReference>
<dbReference type="PANTHER" id="PTHR10533:SF14">
    <property type="entry name" value="PEPTIDE YY-RELATED"/>
    <property type="match status" value="1"/>
</dbReference>
<dbReference type="Pfam" id="PF00159">
    <property type="entry name" value="Hormone_3"/>
    <property type="match status" value="1"/>
</dbReference>
<dbReference type="PRINTS" id="PR00278">
    <property type="entry name" value="PANCHORMONE"/>
</dbReference>
<dbReference type="SMART" id="SM00309">
    <property type="entry name" value="PAH"/>
    <property type="match status" value="1"/>
</dbReference>
<dbReference type="PROSITE" id="PS00265">
    <property type="entry name" value="PANCREATIC_HORMONE_1"/>
    <property type="match status" value="1"/>
</dbReference>
<dbReference type="PROSITE" id="PS50276">
    <property type="entry name" value="PANCREATIC_HORMONE_2"/>
    <property type="match status" value="1"/>
</dbReference>
<sequence>MMSGRRSWPAMATVLLTLLVCLGELVDAYPAKPQAPGEHASPDELNRYYTSLRHYLNLVTRQRFGKRDFSEALLSILLFPDREDPPVKSRPEGAYLW</sequence>
<keyword id="KW-0027">Amidation</keyword>
<keyword id="KW-0165">Cleavage on pair of basic residues</keyword>
<keyword id="KW-0372">Hormone</keyword>
<keyword id="KW-0597">Phosphoprotein</keyword>
<keyword id="KW-1185">Reference proteome</keyword>
<keyword id="KW-0964">Secreted</keyword>
<keyword id="KW-0732">Signal</keyword>
<feature type="signal peptide" evidence="1">
    <location>
        <begin position="1"/>
        <end position="28"/>
    </location>
</feature>
<feature type="peptide" id="PRO_0000025380" description="Peptide YY">
    <location>
        <begin position="29"/>
        <end position="64"/>
    </location>
</feature>
<feature type="propeptide" id="PRO_0000025381">
    <location>
        <begin position="68"/>
        <end position="97"/>
    </location>
</feature>
<feature type="modified residue" description="Phosphoserine" evidence="2">
    <location>
        <position position="41"/>
    </location>
</feature>
<feature type="modified residue" description="Phenylalanine amide" evidence="1">
    <location>
        <position position="64"/>
    </location>
</feature>